<evidence type="ECO:0000255" key="1">
    <source>
        <dbReference type="PROSITE-ProRule" id="PRU00434"/>
    </source>
</evidence>
<evidence type="ECO:0000305" key="2"/>
<protein>
    <recommendedName>
        <fullName>Probable ATP-dependent transporter slr0075</fullName>
    </recommendedName>
</protein>
<sequence>MSQTILSIKNLTASVDGNQILKGVNLEIKAGEVHAIMGRNGSGKSTLSKVITGHPDYEITGGEIIYQGQDLSALEPHERALAGIFLAFQYPLEIPGVSNLDFLRIAYNAKRKHLGLEELDTFDFEDLIQEKLDVVKMNPAFLERSLNEGFSGGEKKRNEILQMAILEPTLSILDEIDSGLDIDALRIVSEGVNFLKNPDNATLVITHYQRLLNYIIPDHIHVMYDGKIVMSGGKELALELEEKGYDFLDEQVLAPI</sequence>
<gene>
    <name type="ordered locus">slr0075</name>
</gene>
<feature type="chain" id="PRO_0000093415" description="Probable ATP-dependent transporter slr0075">
    <location>
        <begin position="1"/>
        <end position="256"/>
    </location>
</feature>
<feature type="domain" description="ABC transporter" evidence="1">
    <location>
        <begin position="6"/>
        <end position="250"/>
    </location>
</feature>
<feature type="binding site" evidence="1">
    <location>
        <begin position="38"/>
        <end position="45"/>
    </location>
    <ligand>
        <name>ATP</name>
        <dbReference type="ChEBI" id="CHEBI:30616"/>
    </ligand>
</feature>
<organism>
    <name type="scientific">Synechocystis sp. (strain ATCC 27184 / PCC 6803 / Kazusa)</name>
    <dbReference type="NCBI Taxonomy" id="1111708"/>
    <lineage>
        <taxon>Bacteria</taxon>
        <taxon>Bacillati</taxon>
        <taxon>Cyanobacteriota</taxon>
        <taxon>Cyanophyceae</taxon>
        <taxon>Synechococcales</taxon>
        <taxon>Merismopediaceae</taxon>
        <taxon>Synechocystis</taxon>
    </lineage>
</organism>
<comment type="similarity">
    <text evidence="2">Belongs to the ABC transporter superfamily. Ycf16 family.</text>
</comment>
<dbReference type="EMBL" id="BA000022">
    <property type="protein sequence ID" value="BAA10543.1"/>
    <property type="molecule type" value="Genomic_DNA"/>
</dbReference>
<dbReference type="PIR" id="S76599">
    <property type="entry name" value="S76599"/>
</dbReference>
<dbReference type="SMR" id="Q55791"/>
<dbReference type="FunCoup" id="Q55791">
    <property type="interactions" value="384"/>
</dbReference>
<dbReference type="STRING" id="1148.gene:10500047"/>
<dbReference type="PaxDb" id="1148-1001706"/>
<dbReference type="EnsemblBacteria" id="BAA10543">
    <property type="protein sequence ID" value="BAA10543"/>
    <property type="gene ID" value="BAA10543"/>
</dbReference>
<dbReference type="KEGG" id="syn:slr0075"/>
<dbReference type="eggNOG" id="COG0396">
    <property type="taxonomic scope" value="Bacteria"/>
</dbReference>
<dbReference type="InParanoid" id="Q55791"/>
<dbReference type="PhylomeDB" id="Q55791"/>
<dbReference type="Proteomes" id="UP000001425">
    <property type="component" value="Chromosome"/>
</dbReference>
<dbReference type="GO" id="GO:0005524">
    <property type="term" value="F:ATP binding"/>
    <property type="evidence" value="ECO:0007669"/>
    <property type="project" value="UniProtKB-KW"/>
</dbReference>
<dbReference type="GO" id="GO:0016887">
    <property type="term" value="F:ATP hydrolysis activity"/>
    <property type="evidence" value="ECO:0007669"/>
    <property type="project" value="InterPro"/>
</dbReference>
<dbReference type="CDD" id="cd03217">
    <property type="entry name" value="ABC_FeS_Assembly"/>
    <property type="match status" value="1"/>
</dbReference>
<dbReference type="Gene3D" id="3.40.50.300">
    <property type="entry name" value="P-loop containing nucleotide triphosphate hydrolases"/>
    <property type="match status" value="1"/>
</dbReference>
<dbReference type="InterPro" id="IPR003439">
    <property type="entry name" value="ABC_transporter-like_ATP-bd"/>
</dbReference>
<dbReference type="InterPro" id="IPR017871">
    <property type="entry name" value="ABC_transporter-like_CS"/>
</dbReference>
<dbReference type="InterPro" id="IPR010230">
    <property type="entry name" value="FeS-cluster_ATPase_SufC"/>
</dbReference>
<dbReference type="InterPro" id="IPR027417">
    <property type="entry name" value="P-loop_NTPase"/>
</dbReference>
<dbReference type="NCBIfam" id="TIGR01978">
    <property type="entry name" value="sufC"/>
    <property type="match status" value="1"/>
</dbReference>
<dbReference type="PANTHER" id="PTHR43204">
    <property type="entry name" value="ABC TRANSPORTER I FAMILY MEMBER 6, CHLOROPLASTIC"/>
    <property type="match status" value="1"/>
</dbReference>
<dbReference type="PANTHER" id="PTHR43204:SF1">
    <property type="entry name" value="ABC TRANSPORTER I FAMILY MEMBER 6, CHLOROPLASTIC"/>
    <property type="match status" value="1"/>
</dbReference>
<dbReference type="Pfam" id="PF00005">
    <property type="entry name" value="ABC_tran"/>
    <property type="match status" value="1"/>
</dbReference>
<dbReference type="SUPFAM" id="SSF52540">
    <property type="entry name" value="P-loop containing nucleoside triphosphate hydrolases"/>
    <property type="match status" value="1"/>
</dbReference>
<dbReference type="PROSITE" id="PS00211">
    <property type="entry name" value="ABC_TRANSPORTER_1"/>
    <property type="match status" value="1"/>
</dbReference>
<dbReference type="PROSITE" id="PS50893">
    <property type="entry name" value="ABC_TRANSPORTER_2"/>
    <property type="match status" value="1"/>
</dbReference>
<name>Y075_SYNY3</name>
<proteinExistence type="inferred from homology"/>
<reference key="1">
    <citation type="journal article" date="1995" name="DNA Res.">
        <title>Sequence analysis of the genome of the unicellular cyanobacterium Synechocystis sp. strain PCC6803. I. Sequence features in the 1 Mb region from map positions 64% to 92% of the genome.</title>
        <authorList>
            <person name="Kaneko T."/>
            <person name="Tanaka A."/>
            <person name="Sato S."/>
            <person name="Kotani H."/>
            <person name="Sazuka T."/>
            <person name="Miyajima N."/>
            <person name="Sugiura M."/>
            <person name="Tabata S."/>
        </authorList>
    </citation>
    <scope>NUCLEOTIDE SEQUENCE [LARGE SCALE GENOMIC DNA]</scope>
    <source>
        <strain>ATCC 27184 / PCC 6803 / N-1</strain>
    </source>
</reference>
<reference key="2">
    <citation type="journal article" date="1996" name="DNA Res.">
        <title>Sequence analysis of the genome of the unicellular cyanobacterium Synechocystis sp. strain PCC6803. II. Sequence determination of the entire genome and assignment of potential protein-coding regions.</title>
        <authorList>
            <person name="Kaneko T."/>
            <person name="Sato S."/>
            <person name="Kotani H."/>
            <person name="Tanaka A."/>
            <person name="Asamizu E."/>
            <person name="Nakamura Y."/>
            <person name="Miyajima N."/>
            <person name="Hirosawa M."/>
            <person name="Sugiura M."/>
            <person name="Sasamoto S."/>
            <person name="Kimura T."/>
            <person name="Hosouchi T."/>
            <person name="Matsuno A."/>
            <person name="Muraki A."/>
            <person name="Nakazaki N."/>
            <person name="Naruo K."/>
            <person name="Okumura S."/>
            <person name="Shimpo S."/>
            <person name="Takeuchi C."/>
            <person name="Wada T."/>
            <person name="Watanabe A."/>
            <person name="Yamada M."/>
            <person name="Yasuda M."/>
            <person name="Tabata S."/>
        </authorList>
    </citation>
    <scope>NUCLEOTIDE SEQUENCE [LARGE SCALE GENOMIC DNA]</scope>
    <source>
        <strain>ATCC 27184 / PCC 6803 / Kazusa</strain>
    </source>
</reference>
<keyword id="KW-0067">ATP-binding</keyword>
<keyword id="KW-0547">Nucleotide-binding</keyword>
<keyword id="KW-1185">Reference proteome</keyword>
<keyword id="KW-0813">Transport</keyword>
<accession>Q55791</accession>